<organism>
    <name type="scientific">Synechococcus sp. (strain RCC307)</name>
    <dbReference type="NCBI Taxonomy" id="316278"/>
    <lineage>
        <taxon>Bacteria</taxon>
        <taxon>Bacillati</taxon>
        <taxon>Cyanobacteriota</taxon>
        <taxon>Cyanophyceae</taxon>
        <taxon>Synechococcales</taxon>
        <taxon>Synechococcaceae</taxon>
        <taxon>Synechococcus</taxon>
    </lineage>
</organism>
<reference key="1">
    <citation type="submission" date="2006-05" db="EMBL/GenBank/DDBJ databases">
        <authorList>
            <consortium name="Genoscope"/>
        </authorList>
    </citation>
    <scope>NUCLEOTIDE SEQUENCE [LARGE SCALE GENOMIC DNA]</scope>
    <source>
        <strain>RCC307</strain>
    </source>
</reference>
<keyword id="KW-0472">Membrane</keyword>
<keyword id="KW-0520">NAD</keyword>
<keyword id="KW-0521">NADP</keyword>
<keyword id="KW-0618">Plastoquinone</keyword>
<keyword id="KW-0874">Quinone</keyword>
<keyword id="KW-1185">Reference proteome</keyword>
<keyword id="KW-0793">Thylakoid</keyword>
<keyword id="KW-1278">Translocase</keyword>
<keyword id="KW-0813">Transport</keyword>
<feature type="chain" id="PRO_0000352206" description="NAD(P)H-quinone oxidoreductase subunit M">
    <location>
        <begin position="1"/>
        <end position="116"/>
    </location>
</feature>
<accession>A5GQI1</accession>
<gene>
    <name evidence="1" type="primary">ndhM</name>
    <name type="ordered locus">SynRCC307_0237</name>
</gene>
<dbReference type="EC" id="7.1.1.-" evidence="1"/>
<dbReference type="EMBL" id="CT978603">
    <property type="protein sequence ID" value="CAK27140.1"/>
    <property type="molecule type" value="Genomic_DNA"/>
</dbReference>
<dbReference type="SMR" id="A5GQI1"/>
<dbReference type="STRING" id="316278.SynRCC307_0237"/>
<dbReference type="KEGG" id="syr:SynRCC307_0237"/>
<dbReference type="eggNOG" id="ENOG5031AQM">
    <property type="taxonomic scope" value="Bacteria"/>
</dbReference>
<dbReference type="HOGENOM" id="CLU_137431_0_0_3"/>
<dbReference type="OrthoDB" id="461686at2"/>
<dbReference type="Proteomes" id="UP000001115">
    <property type="component" value="Chromosome"/>
</dbReference>
<dbReference type="GO" id="GO:0031676">
    <property type="term" value="C:plasma membrane-derived thylakoid membrane"/>
    <property type="evidence" value="ECO:0007669"/>
    <property type="project" value="UniProtKB-SubCell"/>
</dbReference>
<dbReference type="GO" id="GO:0016655">
    <property type="term" value="F:oxidoreductase activity, acting on NAD(P)H, quinone or similar compound as acceptor"/>
    <property type="evidence" value="ECO:0007669"/>
    <property type="project" value="UniProtKB-UniRule"/>
</dbReference>
<dbReference type="GO" id="GO:0048038">
    <property type="term" value="F:quinone binding"/>
    <property type="evidence" value="ECO:0007669"/>
    <property type="project" value="UniProtKB-KW"/>
</dbReference>
<dbReference type="HAMAP" id="MF_01352">
    <property type="entry name" value="NDH1_NDH1M"/>
    <property type="match status" value="1"/>
</dbReference>
<dbReference type="InterPro" id="IPR018922">
    <property type="entry name" value="NdhM"/>
</dbReference>
<dbReference type="PANTHER" id="PTHR36900">
    <property type="entry name" value="NAD(P)H-QUINONE OXIDOREDUCTASE SUBUNIT M, CHLOROPLASTIC"/>
    <property type="match status" value="1"/>
</dbReference>
<dbReference type="PANTHER" id="PTHR36900:SF1">
    <property type="entry name" value="NAD(P)H-QUINONE OXIDOREDUCTASE SUBUNIT M, CHLOROPLASTIC"/>
    <property type="match status" value="1"/>
</dbReference>
<dbReference type="Pfam" id="PF10664">
    <property type="entry name" value="NdhM"/>
    <property type="match status" value="1"/>
</dbReference>
<name>NDHM_SYNR3</name>
<sequence length="116" mass="13057">MSDTPLKCTTRHVRIFTATVEDNGELKASSDKLTLDLDPDNEFEWDQPVLAKVQQRFAELVDAAAGTELSDYNLRRIGTDLEGFIRQLLQAGELRYNLGARVLNYSMGLPRTPETL</sequence>
<evidence type="ECO:0000255" key="1">
    <source>
        <dbReference type="HAMAP-Rule" id="MF_01352"/>
    </source>
</evidence>
<comment type="function">
    <text evidence="1">NDH-1 shuttles electrons from an unknown electron donor, via FMN and iron-sulfur (Fe-S) centers, to quinones in the respiratory and/or the photosynthetic chain. The immediate electron acceptor for the enzyme in this species is believed to be plastoquinone. Couples the redox reaction to proton translocation, and thus conserves the redox energy in a proton gradient. Cyanobacterial NDH-1 also plays a role in inorganic carbon-concentration.</text>
</comment>
<comment type="catalytic activity">
    <reaction evidence="1">
        <text>a plastoquinone + NADH + (n+1) H(+)(in) = a plastoquinol + NAD(+) + n H(+)(out)</text>
        <dbReference type="Rhea" id="RHEA:42608"/>
        <dbReference type="Rhea" id="RHEA-COMP:9561"/>
        <dbReference type="Rhea" id="RHEA-COMP:9562"/>
        <dbReference type="ChEBI" id="CHEBI:15378"/>
        <dbReference type="ChEBI" id="CHEBI:17757"/>
        <dbReference type="ChEBI" id="CHEBI:57540"/>
        <dbReference type="ChEBI" id="CHEBI:57945"/>
        <dbReference type="ChEBI" id="CHEBI:62192"/>
    </reaction>
</comment>
<comment type="catalytic activity">
    <reaction evidence="1">
        <text>a plastoquinone + NADPH + (n+1) H(+)(in) = a plastoquinol + NADP(+) + n H(+)(out)</text>
        <dbReference type="Rhea" id="RHEA:42612"/>
        <dbReference type="Rhea" id="RHEA-COMP:9561"/>
        <dbReference type="Rhea" id="RHEA-COMP:9562"/>
        <dbReference type="ChEBI" id="CHEBI:15378"/>
        <dbReference type="ChEBI" id="CHEBI:17757"/>
        <dbReference type="ChEBI" id="CHEBI:57783"/>
        <dbReference type="ChEBI" id="CHEBI:58349"/>
        <dbReference type="ChEBI" id="CHEBI:62192"/>
    </reaction>
</comment>
<comment type="subunit">
    <text evidence="1">NDH-1 can be composed of about 15 different subunits; different subcomplexes with different compositions have been identified which probably have different functions.</text>
</comment>
<comment type="subcellular location">
    <subcellularLocation>
        <location evidence="1">Cellular thylakoid membrane</location>
        <topology evidence="1">Peripheral membrane protein</topology>
        <orientation evidence="1">Cytoplasmic side</orientation>
    </subcellularLocation>
</comment>
<comment type="similarity">
    <text evidence="1">Belongs to the complex I NdhM subunit family.</text>
</comment>
<protein>
    <recommendedName>
        <fullName evidence="1">NAD(P)H-quinone oxidoreductase subunit M</fullName>
        <ecNumber evidence="1">7.1.1.-</ecNumber>
    </recommendedName>
    <alternativeName>
        <fullName evidence="1">NAD(P)H dehydrogenase I subunit M</fullName>
        <shortName evidence="1">NDH-1 subunit M</shortName>
        <shortName evidence="1">NDH-M</shortName>
    </alternativeName>
</protein>
<proteinExistence type="inferred from homology"/>